<sequence>MGRSPCCEKAHTNKGAWTKEEDERLVAYIKAHGEGCWRSLPKAAGLLRCGKSCRLRWINYLRPDLKRGNFTEEEDELIIKLHSLLGNKWSLIAGRLPGRTDNEIKNYWNTHIRRKLINRGIDPTSHRPIQESSASQDSKPTQLEPVTSNTINISFTSAPKVETFHESISFPGKSEKISMLTFKEEKDECPVQEKFPDLNLELRISLPDDVDRLQGHGKSTTPRCFKCSLGMINGMECRCGRMRCDVVGGSSKGSDMSNGFDFLGLAKKETTSLLGFRSLEMK</sequence>
<accession>Q9SZP1</accession>
<accession>O49774</accession>
<accession>Q7DLI1</accession>
<comment type="function">
    <text evidence="3">Transcription repressor involved in regulation of protection against UV. Mediates transcriptional repression of CYP73A5, the gene encoding trans-cinnamate 4-monooxygenase, thereby regulating the accumulation of the UV-protectant compound sinapoylmalate.</text>
</comment>
<comment type="subunit">
    <text evidence="4 5">Interacts with BHLH12/MYC1 and BHLH42/TT8 (PubMed:15361138). Interacts with SAD2 (PubMed:17993626).</text>
</comment>
<comment type="subcellular location">
    <subcellularLocation>
        <location evidence="7">Nucleus</location>
    </subcellularLocation>
</comment>
<comment type="tissue specificity">
    <text evidence="6">Widely expressed at low level. Highly expressed in siliques. Weakly expressed in seedlings, young and mature leaves, cauline leaves, stems, flower buds and roots.</text>
</comment>
<comment type="induction">
    <text evidence="3">Down-regulated by exposure to UV-B light.</text>
</comment>
<comment type="disruption phenotype">
    <text evidence="3">Defects lead to a better tolerance of UV-B irradiation due to the increase in sinapate ester accumulation.</text>
</comment>
<evidence type="ECO:0000255" key="1">
    <source>
        <dbReference type="PROSITE-ProRule" id="PRU00625"/>
    </source>
</evidence>
<evidence type="ECO:0000256" key="2">
    <source>
        <dbReference type="SAM" id="MobiDB-lite"/>
    </source>
</evidence>
<evidence type="ECO:0000269" key="3">
    <source>
    </source>
</evidence>
<evidence type="ECO:0000269" key="4">
    <source>
    </source>
</evidence>
<evidence type="ECO:0000269" key="5">
    <source>
    </source>
</evidence>
<evidence type="ECO:0000269" key="6">
    <source>
    </source>
</evidence>
<evidence type="ECO:0000305" key="7"/>
<proteinExistence type="evidence at protein level"/>
<keyword id="KW-0238">DNA-binding</keyword>
<keyword id="KW-0539">Nucleus</keyword>
<keyword id="KW-1185">Reference proteome</keyword>
<keyword id="KW-0677">Repeat</keyword>
<keyword id="KW-0678">Repressor</keyword>
<keyword id="KW-0804">Transcription</keyword>
<keyword id="KW-0805">Transcription regulation</keyword>
<gene>
    <name type="primary">MYB4</name>
    <name type="ordered locus">At4g38620</name>
    <name type="ORF">F20M13.180</name>
</gene>
<reference key="1">
    <citation type="journal article" date="1998" name="Plant J.">
        <title>Towards functional characterisation of the members of the R2R3-MYB gene family from Arabidopsis thaliana.</title>
        <authorList>
            <person name="Kranz H.D."/>
            <person name="Denekamp M."/>
            <person name="Greco R."/>
            <person name="Jin H.-L."/>
            <person name="Leyva A."/>
            <person name="Meissner R.C."/>
            <person name="Petroni K."/>
            <person name="Urzainqui A."/>
            <person name="Bevan M."/>
            <person name="Martin C."/>
            <person name="Smeekens S."/>
            <person name="Tonelli C."/>
            <person name="Paz-Ares J."/>
            <person name="Weisshaar B."/>
        </authorList>
    </citation>
    <scope>NUCLEOTIDE SEQUENCE [MRNA]</scope>
    <scope>TISSUE SPECIFICITY</scope>
    <scope>NOMENCLATURE</scope>
    <source>
        <strain>cv. Columbia</strain>
    </source>
</reference>
<reference key="2">
    <citation type="journal article" date="1999" name="Nature">
        <title>Sequence and analysis of chromosome 4 of the plant Arabidopsis thaliana.</title>
        <authorList>
            <person name="Mayer K.F.X."/>
            <person name="Schueller C."/>
            <person name="Wambutt R."/>
            <person name="Murphy G."/>
            <person name="Volckaert G."/>
            <person name="Pohl T."/>
            <person name="Duesterhoeft A."/>
            <person name="Stiekema W."/>
            <person name="Entian K.-D."/>
            <person name="Terryn N."/>
            <person name="Harris B."/>
            <person name="Ansorge W."/>
            <person name="Brandt P."/>
            <person name="Grivell L.A."/>
            <person name="Rieger M."/>
            <person name="Weichselgartner M."/>
            <person name="de Simone V."/>
            <person name="Obermaier B."/>
            <person name="Mache R."/>
            <person name="Mueller M."/>
            <person name="Kreis M."/>
            <person name="Delseny M."/>
            <person name="Puigdomenech P."/>
            <person name="Watson M."/>
            <person name="Schmidtheini T."/>
            <person name="Reichert B."/>
            <person name="Portetelle D."/>
            <person name="Perez-Alonso M."/>
            <person name="Boutry M."/>
            <person name="Bancroft I."/>
            <person name="Vos P."/>
            <person name="Hoheisel J."/>
            <person name="Zimmermann W."/>
            <person name="Wedler H."/>
            <person name="Ridley P."/>
            <person name="Langham S.-A."/>
            <person name="McCullagh B."/>
            <person name="Bilham L."/>
            <person name="Robben J."/>
            <person name="van der Schueren J."/>
            <person name="Grymonprez B."/>
            <person name="Chuang Y.-J."/>
            <person name="Vandenbussche F."/>
            <person name="Braeken M."/>
            <person name="Weltjens I."/>
            <person name="Voet M."/>
            <person name="Bastiaens I."/>
            <person name="Aert R."/>
            <person name="Defoor E."/>
            <person name="Weitzenegger T."/>
            <person name="Bothe G."/>
            <person name="Ramsperger U."/>
            <person name="Hilbert H."/>
            <person name="Braun M."/>
            <person name="Holzer E."/>
            <person name="Brandt A."/>
            <person name="Peters S."/>
            <person name="van Staveren M."/>
            <person name="Dirkse W."/>
            <person name="Mooijman P."/>
            <person name="Klein Lankhorst R."/>
            <person name="Rose M."/>
            <person name="Hauf J."/>
            <person name="Koetter P."/>
            <person name="Berneiser S."/>
            <person name="Hempel S."/>
            <person name="Feldpausch M."/>
            <person name="Lamberth S."/>
            <person name="Van den Daele H."/>
            <person name="De Keyser A."/>
            <person name="Buysshaert C."/>
            <person name="Gielen J."/>
            <person name="Villarroel R."/>
            <person name="De Clercq R."/>
            <person name="van Montagu M."/>
            <person name="Rogers J."/>
            <person name="Cronin A."/>
            <person name="Quail M.A."/>
            <person name="Bray-Allen S."/>
            <person name="Clark L."/>
            <person name="Doggett J."/>
            <person name="Hall S."/>
            <person name="Kay M."/>
            <person name="Lennard N."/>
            <person name="McLay K."/>
            <person name="Mayes R."/>
            <person name="Pettett A."/>
            <person name="Rajandream M.A."/>
            <person name="Lyne M."/>
            <person name="Benes V."/>
            <person name="Rechmann S."/>
            <person name="Borkova D."/>
            <person name="Bloecker H."/>
            <person name="Scharfe M."/>
            <person name="Grimm M."/>
            <person name="Loehnert T.-H."/>
            <person name="Dose S."/>
            <person name="de Haan M."/>
            <person name="Maarse A.C."/>
            <person name="Schaefer M."/>
            <person name="Mueller-Auer S."/>
            <person name="Gabel C."/>
            <person name="Fuchs M."/>
            <person name="Fartmann B."/>
            <person name="Granderath K."/>
            <person name="Dauner D."/>
            <person name="Herzl A."/>
            <person name="Neumann S."/>
            <person name="Argiriou A."/>
            <person name="Vitale D."/>
            <person name="Liguori R."/>
            <person name="Piravandi E."/>
            <person name="Massenet O."/>
            <person name="Quigley F."/>
            <person name="Clabauld G."/>
            <person name="Muendlein A."/>
            <person name="Felber R."/>
            <person name="Schnabl S."/>
            <person name="Hiller R."/>
            <person name="Schmidt W."/>
            <person name="Lecharny A."/>
            <person name="Aubourg S."/>
            <person name="Chefdor F."/>
            <person name="Cooke R."/>
            <person name="Berger C."/>
            <person name="Monfort A."/>
            <person name="Casacuberta E."/>
            <person name="Gibbons T."/>
            <person name="Weber N."/>
            <person name="Vandenbol M."/>
            <person name="Bargues M."/>
            <person name="Terol J."/>
            <person name="Torres A."/>
            <person name="Perez-Perez A."/>
            <person name="Purnelle B."/>
            <person name="Bent E."/>
            <person name="Johnson S."/>
            <person name="Tacon D."/>
            <person name="Jesse T."/>
            <person name="Heijnen L."/>
            <person name="Schwarz S."/>
            <person name="Scholler P."/>
            <person name="Heber S."/>
            <person name="Francs P."/>
            <person name="Bielke C."/>
            <person name="Frishman D."/>
            <person name="Haase D."/>
            <person name="Lemcke K."/>
            <person name="Mewes H.-W."/>
            <person name="Stocker S."/>
            <person name="Zaccaria P."/>
            <person name="Bevan M."/>
            <person name="Wilson R.K."/>
            <person name="de la Bastide M."/>
            <person name="Habermann K."/>
            <person name="Parnell L."/>
            <person name="Dedhia N."/>
            <person name="Gnoj L."/>
            <person name="Schutz K."/>
            <person name="Huang E."/>
            <person name="Spiegel L."/>
            <person name="Sekhon M."/>
            <person name="Murray J."/>
            <person name="Sheet P."/>
            <person name="Cordes M."/>
            <person name="Abu-Threideh J."/>
            <person name="Stoneking T."/>
            <person name="Kalicki J."/>
            <person name="Graves T."/>
            <person name="Harmon G."/>
            <person name="Edwards J."/>
            <person name="Latreille P."/>
            <person name="Courtney L."/>
            <person name="Cloud J."/>
            <person name="Abbott A."/>
            <person name="Scott K."/>
            <person name="Johnson D."/>
            <person name="Minx P."/>
            <person name="Bentley D."/>
            <person name="Fulton B."/>
            <person name="Miller N."/>
            <person name="Greco T."/>
            <person name="Kemp K."/>
            <person name="Kramer J."/>
            <person name="Fulton L."/>
            <person name="Mardis E."/>
            <person name="Dante M."/>
            <person name="Pepin K."/>
            <person name="Hillier L.W."/>
            <person name="Nelson J."/>
            <person name="Spieth J."/>
            <person name="Ryan E."/>
            <person name="Andrews S."/>
            <person name="Geisel C."/>
            <person name="Layman D."/>
            <person name="Du H."/>
            <person name="Ali J."/>
            <person name="Berghoff A."/>
            <person name="Jones K."/>
            <person name="Drone K."/>
            <person name="Cotton M."/>
            <person name="Joshu C."/>
            <person name="Antonoiu B."/>
            <person name="Zidanic M."/>
            <person name="Strong C."/>
            <person name="Sun H."/>
            <person name="Lamar B."/>
            <person name="Yordan C."/>
            <person name="Ma P."/>
            <person name="Zhong J."/>
            <person name="Preston R."/>
            <person name="Vil D."/>
            <person name="Shekher M."/>
            <person name="Matero A."/>
            <person name="Shah R."/>
            <person name="Swaby I.K."/>
            <person name="O'Shaughnessy A."/>
            <person name="Rodriguez M."/>
            <person name="Hoffman J."/>
            <person name="Till S."/>
            <person name="Granat S."/>
            <person name="Shohdy N."/>
            <person name="Hasegawa A."/>
            <person name="Hameed A."/>
            <person name="Lodhi M."/>
            <person name="Johnson A."/>
            <person name="Chen E."/>
            <person name="Marra M.A."/>
            <person name="Martienssen R."/>
            <person name="McCombie W.R."/>
        </authorList>
    </citation>
    <scope>NUCLEOTIDE SEQUENCE [LARGE SCALE GENOMIC DNA]</scope>
    <source>
        <strain>cv. Columbia</strain>
    </source>
</reference>
<reference key="3">
    <citation type="journal article" date="2017" name="Plant J.">
        <title>Araport11: a complete reannotation of the Arabidopsis thaliana reference genome.</title>
        <authorList>
            <person name="Cheng C.Y."/>
            <person name="Krishnakumar V."/>
            <person name="Chan A.P."/>
            <person name="Thibaud-Nissen F."/>
            <person name="Schobel S."/>
            <person name="Town C.D."/>
        </authorList>
    </citation>
    <scope>GENOME REANNOTATION</scope>
    <source>
        <strain>cv. Columbia</strain>
    </source>
</reference>
<reference key="4">
    <citation type="journal article" date="2004" name="Plant Physiol.">
        <title>Genome-wide ORFeome cloning and analysis of Arabidopsis transcription factor genes.</title>
        <authorList>
            <person name="Gong W."/>
            <person name="Shen Y.-P."/>
            <person name="Ma L.-G."/>
            <person name="Pan Y."/>
            <person name="Du Y.-L."/>
            <person name="Wang D.-H."/>
            <person name="Yang J.-Y."/>
            <person name="Hu L.-D."/>
            <person name="Liu X.-F."/>
            <person name="Dong C.-X."/>
            <person name="Ma L."/>
            <person name="Chen Y.-H."/>
            <person name="Yang X.-Y."/>
            <person name="Gao Y."/>
            <person name="Zhu D."/>
            <person name="Tan X."/>
            <person name="Mu J.-Y."/>
            <person name="Zhang D.-B."/>
            <person name="Liu Y.-L."/>
            <person name="Dinesh-Kumar S.P."/>
            <person name="Li Y."/>
            <person name="Wang X.-P."/>
            <person name="Gu H.-Y."/>
            <person name="Qu L.-J."/>
            <person name="Bai S.-N."/>
            <person name="Lu Y.-T."/>
            <person name="Li J.-Y."/>
            <person name="Zhao J.-D."/>
            <person name="Zuo J."/>
            <person name="Huang H."/>
            <person name="Deng X.-W."/>
            <person name="Zhu Y.-X."/>
        </authorList>
    </citation>
    <scope>NUCLEOTIDE SEQUENCE [LARGE SCALE MRNA]</scope>
    <source>
        <strain>cv. Columbia</strain>
    </source>
</reference>
<reference key="5">
    <citation type="journal article" date="2003" name="Science">
        <title>Empirical analysis of transcriptional activity in the Arabidopsis genome.</title>
        <authorList>
            <person name="Yamada K."/>
            <person name="Lim J."/>
            <person name="Dale J.M."/>
            <person name="Chen H."/>
            <person name="Shinn P."/>
            <person name="Palm C.J."/>
            <person name="Southwick A.M."/>
            <person name="Wu H.C."/>
            <person name="Kim C.J."/>
            <person name="Nguyen M."/>
            <person name="Pham P.K."/>
            <person name="Cheuk R.F."/>
            <person name="Karlin-Newmann G."/>
            <person name="Liu S.X."/>
            <person name="Lam B."/>
            <person name="Sakano H."/>
            <person name="Wu T."/>
            <person name="Yu G."/>
            <person name="Miranda M."/>
            <person name="Quach H.L."/>
            <person name="Tripp M."/>
            <person name="Chang C.H."/>
            <person name="Lee J.M."/>
            <person name="Toriumi M.J."/>
            <person name="Chan M.M."/>
            <person name="Tang C.C."/>
            <person name="Onodera C.S."/>
            <person name="Deng J.M."/>
            <person name="Akiyama K."/>
            <person name="Ansari Y."/>
            <person name="Arakawa T."/>
            <person name="Banh J."/>
            <person name="Banno F."/>
            <person name="Bowser L."/>
            <person name="Brooks S.Y."/>
            <person name="Carninci P."/>
            <person name="Chao Q."/>
            <person name="Choy N."/>
            <person name="Enju A."/>
            <person name="Goldsmith A.D."/>
            <person name="Gurjal M."/>
            <person name="Hansen N.F."/>
            <person name="Hayashizaki Y."/>
            <person name="Johnson-Hopson C."/>
            <person name="Hsuan V.W."/>
            <person name="Iida K."/>
            <person name="Karnes M."/>
            <person name="Khan S."/>
            <person name="Koesema E."/>
            <person name="Ishida J."/>
            <person name="Jiang P.X."/>
            <person name="Jones T."/>
            <person name="Kawai J."/>
            <person name="Kamiya A."/>
            <person name="Meyers C."/>
            <person name="Nakajima M."/>
            <person name="Narusaka M."/>
            <person name="Seki M."/>
            <person name="Sakurai T."/>
            <person name="Satou M."/>
            <person name="Tamse R."/>
            <person name="Vaysberg M."/>
            <person name="Wallender E.K."/>
            <person name="Wong C."/>
            <person name="Yamamura Y."/>
            <person name="Yuan S."/>
            <person name="Shinozaki K."/>
            <person name="Davis R.W."/>
            <person name="Theologis A."/>
            <person name="Ecker J.R."/>
        </authorList>
    </citation>
    <scope>NUCLEOTIDE SEQUENCE [LARGE SCALE MRNA]</scope>
    <source>
        <strain>cv. Columbia</strain>
    </source>
</reference>
<reference key="6">
    <citation type="journal article" date="1998" name="Plant J.">
        <title>More than 80 R2R3-MYB regulatory genes in the genome of Arabidopsis thaliana.</title>
        <authorList>
            <person name="Romero I."/>
            <person name="Fuertes A."/>
            <person name="Benito M.J."/>
            <person name="Malpica J.M."/>
            <person name="Leyva A."/>
            <person name="Paz-Ares J."/>
        </authorList>
    </citation>
    <scope>NUCLEOTIDE SEQUENCE [MRNA] OF 55-99</scope>
</reference>
<reference key="7">
    <citation type="journal article" date="2000" name="EMBO J.">
        <title>Transcriptional repression by AtMYB4 controls production of UV-protecting sunscreens in Arabidopsis.</title>
        <authorList>
            <person name="Jin H."/>
            <person name="Cominelli E."/>
            <person name="Bailey P."/>
            <person name="Parr A."/>
            <person name="Mehrtens F."/>
            <person name="Jones J."/>
            <person name="Tonelli C."/>
            <person name="Weisshaar B."/>
            <person name="Martin C."/>
        </authorList>
    </citation>
    <scope>FUNCTION</scope>
    <scope>INDUCTION</scope>
    <scope>DISRUPTION PHENOTYPE</scope>
</reference>
<reference key="8">
    <citation type="journal article" date="2004" name="Plant J.">
        <title>Comprehensive identification of Arabidopsis thaliana MYB transcription factors interacting with R/B-like BHLH proteins.</title>
        <authorList>
            <person name="Zimmermann I.M."/>
            <person name="Heim M.A."/>
            <person name="Weisshaar B."/>
            <person name="Uhrig J.F."/>
        </authorList>
    </citation>
    <scope>INTERACTION WITH BHLH12 AND BHLH42</scope>
</reference>
<reference key="9">
    <citation type="journal article" date="2006" name="Plant Mol. Biol.">
        <title>The MYB transcription factor superfamily of Arabidopsis: expression analysis and phylogenetic comparison with the rice MYB family.</title>
        <authorList>
            <person name="Chen Y."/>
            <person name="Yang X."/>
            <person name="He K."/>
            <person name="Liu M."/>
            <person name="Li J."/>
            <person name="Gao Z."/>
            <person name="Lin Z."/>
            <person name="Zhang Y."/>
            <person name="Wang X."/>
            <person name="Qiu X."/>
            <person name="Shen Y."/>
            <person name="Zhang L."/>
            <person name="Deng X."/>
            <person name="Luo J."/>
            <person name="Deng X.-W."/>
            <person name="Chen Z."/>
            <person name="Gu H."/>
            <person name="Qu L.-J."/>
        </authorList>
    </citation>
    <scope>GENE FAMILY</scope>
</reference>
<reference key="10">
    <citation type="journal article" date="2007" name="Plant Cell">
        <title>SAD2, an importin -like protein, is required for UV-B response in Arabidopsis by mediating MYB4 nuclear trafficking.</title>
        <authorList>
            <person name="Zhao J."/>
            <person name="Zhang W."/>
            <person name="Zhao Y."/>
            <person name="Gong X."/>
            <person name="Guo L."/>
            <person name="Zhu G."/>
            <person name="Wang X."/>
            <person name="Gong Z."/>
            <person name="Schumaker K.S."/>
            <person name="Guo Y."/>
        </authorList>
    </citation>
    <scope>INTERACTION WITH SAD2</scope>
</reference>
<organism>
    <name type="scientific">Arabidopsis thaliana</name>
    <name type="common">Mouse-ear cress</name>
    <dbReference type="NCBI Taxonomy" id="3702"/>
    <lineage>
        <taxon>Eukaryota</taxon>
        <taxon>Viridiplantae</taxon>
        <taxon>Streptophyta</taxon>
        <taxon>Embryophyta</taxon>
        <taxon>Tracheophyta</taxon>
        <taxon>Spermatophyta</taxon>
        <taxon>Magnoliopsida</taxon>
        <taxon>eudicotyledons</taxon>
        <taxon>Gunneridae</taxon>
        <taxon>Pentapetalae</taxon>
        <taxon>rosids</taxon>
        <taxon>malvids</taxon>
        <taxon>Brassicales</taxon>
        <taxon>Brassicaceae</taxon>
        <taxon>Camelineae</taxon>
        <taxon>Arabidopsis</taxon>
    </lineage>
</organism>
<dbReference type="EMBL" id="AF062860">
    <property type="protein sequence ID" value="AAC83582.1"/>
    <property type="molecule type" value="mRNA"/>
</dbReference>
<dbReference type="EMBL" id="AL035540">
    <property type="protein sequence ID" value="CAB37518.1"/>
    <property type="molecule type" value="Genomic_DNA"/>
</dbReference>
<dbReference type="EMBL" id="AL161593">
    <property type="protein sequence ID" value="CAB80526.1"/>
    <property type="molecule type" value="Genomic_DNA"/>
</dbReference>
<dbReference type="EMBL" id="CP002687">
    <property type="protein sequence ID" value="AEE86955.1"/>
    <property type="molecule type" value="Genomic_DNA"/>
</dbReference>
<dbReference type="EMBL" id="AY519615">
    <property type="protein sequence ID" value="AAS10085.1"/>
    <property type="molecule type" value="mRNA"/>
</dbReference>
<dbReference type="EMBL" id="AY070100">
    <property type="protein sequence ID" value="AAL49837.1"/>
    <property type="molecule type" value="mRNA"/>
</dbReference>
<dbReference type="EMBL" id="AY123004">
    <property type="protein sequence ID" value="AAM67537.1"/>
    <property type="molecule type" value="mRNA"/>
</dbReference>
<dbReference type="EMBL" id="AY140037">
    <property type="protein sequence ID" value="AAM98178.1"/>
    <property type="molecule type" value="mRNA"/>
</dbReference>
<dbReference type="EMBL" id="BT006302">
    <property type="protein sequence ID" value="AAP13410.1"/>
    <property type="molecule type" value="mRNA"/>
</dbReference>
<dbReference type="EMBL" id="Z95763">
    <property type="protein sequence ID" value="CAB09195.1"/>
    <property type="molecule type" value="mRNA"/>
</dbReference>
<dbReference type="PIR" id="T05690">
    <property type="entry name" value="T05690"/>
</dbReference>
<dbReference type="PIR" id="T51632">
    <property type="entry name" value="T51632"/>
</dbReference>
<dbReference type="RefSeq" id="NP_195574.1">
    <property type="nucleotide sequence ID" value="NM_120023.3"/>
</dbReference>
<dbReference type="SMR" id="Q9SZP1"/>
<dbReference type="BioGRID" id="15298">
    <property type="interactions" value="6"/>
</dbReference>
<dbReference type="FunCoup" id="Q9SZP1">
    <property type="interactions" value="27"/>
</dbReference>
<dbReference type="IntAct" id="Q9SZP1">
    <property type="interactions" value="4"/>
</dbReference>
<dbReference type="STRING" id="3702.Q9SZP1"/>
<dbReference type="PaxDb" id="3702-AT4G38620.1"/>
<dbReference type="ProteomicsDB" id="251002"/>
<dbReference type="EnsemblPlants" id="AT4G38620.1">
    <property type="protein sequence ID" value="AT4G38620.1"/>
    <property type="gene ID" value="AT4G38620"/>
</dbReference>
<dbReference type="GeneID" id="830018"/>
<dbReference type="Gramene" id="AT4G38620.1">
    <property type="protein sequence ID" value="AT4G38620.1"/>
    <property type="gene ID" value="AT4G38620"/>
</dbReference>
<dbReference type="KEGG" id="ath:AT4G38620"/>
<dbReference type="Araport" id="AT4G38620"/>
<dbReference type="TAIR" id="AT4G38620">
    <property type="gene designation" value="MYB4"/>
</dbReference>
<dbReference type="eggNOG" id="KOG0048">
    <property type="taxonomic scope" value="Eukaryota"/>
</dbReference>
<dbReference type="HOGENOM" id="CLU_028567_23_0_1"/>
<dbReference type="InParanoid" id="Q9SZP1"/>
<dbReference type="OMA" id="CKVERFP"/>
<dbReference type="PhylomeDB" id="Q9SZP1"/>
<dbReference type="PRO" id="PR:Q9SZP1"/>
<dbReference type="Proteomes" id="UP000006548">
    <property type="component" value="Chromosome 4"/>
</dbReference>
<dbReference type="ExpressionAtlas" id="Q9SZP1">
    <property type="expression patterns" value="baseline and differential"/>
</dbReference>
<dbReference type="GO" id="GO:0005634">
    <property type="term" value="C:nucleus"/>
    <property type="evidence" value="ECO:0007669"/>
    <property type="project" value="UniProtKB-SubCell"/>
</dbReference>
<dbReference type="GO" id="GO:0003677">
    <property type="term" value="F:DNA binding"/>
    <property type="evidence" value="ECO:0000314"/>
    <property type="project" value="TAIR"/>
</dbReference>
<dbReference type="GO" id="GO:0003700">
    <property type="term" value="F:DNA-binding transcription factor activity"/>
    <property type="evidence" value="ECO:0000250"/>
    <property type="project" value="TAIR"/>
</dbReference>
<dbReference type="GO" id="GO:0000976">
    <property type="term" value="F:transcription cis-regulatory region binding"/>
    <property type="evidence" value="ECO:0000353"/>
    <property type="project" value="TAIR"/>
</dbReference>
<dbReference type="GO" id="GO:0045892">
    <property type="term" value="P:negative regulation of DNA-templated transcription"/>
    <property type="evidence" value="ECO:0000315"/>
    <property type="project" value="TAIR"/>
</dbReference>
<dbReference type="GO" id="GO:1903086">
    <property type="term" value="P:negative regulation of sinapate ester biosynthetic process"/>
    <property type="evidence" value="ECO:0000315"/>
    <property type="project" value="TAIR"/>
</dbReference>
<dbReference type="GO" id="GO:2000762">
    <property type="term" value="P:regulation of phenylpropanoid metabolic process"/>
    <property type="evidence" value="ECO:0000315"/>
    <property type="project" value="TAIR"/>
</dbReference>
<dbReference type="GO" id="GO:0010224">
    <property type="term" value="P:response to UV-B"/>
    <property type="evidence" value="ECO:0000315"/>
    <property type="project" value="TAIR"/>
</dbReference>
<dbReference type="CDD" id="cd00167">
    <property type="entry name" value="SANT"/>
    <property type="match status" value="2"/>
</dbReference>
<dbReference type="FunFam" id="1.10.10.60:FF:000157">
    <property type="entry name" value="Myb transcription factor"/>
    <property type="match status" value="1"/>
</dbReference>
<dbReference type="FunFam" id="1.10.10.60:FF:000001">
    <property type="entry name" value="MYB-related transcription factor"/>
    <property type="match status" value="1"/>
</dbReference>
<dbReference type="Gene3D" id="1.10.10.60">
    <property type="entry name" value="Homeodomain-like"/>
    <property type="match status" value="2"/>
</dbReference>
<dbReference type="InterPro" id="IPR009057">
    <property type="entry name" value="Homeodomain-like_sf"/>
</dbReference>
<dbReference type="InterPro" id="IPR017930">
    <property type="entry name" value="Myb_dom"/>
</dbReference>
<dbReference type="InterPro" id="IPR015495">
    <property type="entry name" value="Myb_TF_plants"/>
</dbReference>
<dbReference type="InterPro" id="IPR001005">
    <property type="entry name" value="SANT/Myb"/>
</dbReference>
<dbReference type="PANTHER" id="PTHR47999">
    <property type="entry name" value="TRANSCRIPTION FACTOR MYB8-RELATED-RELATED"/>
    <property type="match status" value="1"/>
</dbReference>
<dbReference type="PANTHER" id="PTHR47999:SF23">
    <property type="entry name" value="TRANSCRIPTION REPRESSOR MYB4"/>
    <property type="match status" value="1"/>
</dbReference>
<dbReference type="Pfam" id="PF00249">
    <property type="entry name" value="Myb_DNA-binding"/>
    <property type="match status" value="2"/>
</dbReference>
<dbReference type="SMART" id="SM00717">
    <property type="entry name" value="SANT"/>
    <property type="match status" value="2"/>
</dbReference>
<dbReference type="SUPFAM" id="SSF46689">
    <property type="entry name" value="Homeodomain-like"/>
    <property type="match status" value="1"/>
</dbReference>
<dbReference type="PROSITE" id="PS51294">
    <property type="entry name" value="HTH_MYB"/>
    <property type="match status" value="2"/>
</dbReference>
<name>MYB4_ARATH</name>
<protein>
    <recommendedName>
        <fullName>Transcription repressor MYB4</fullName>
    </recommendedName>
    <alternativeName>
        <fullName>Myb-related protein 4</fullName>
        <shortName>AtMYB4</shortName>
    </alternativeName>
</protein>
<feature type="chain" id="PRO_0000197075" description="Transcription repressor MYB4">
    <location>
        <begin position="1"/>
        <end position="282"/>
    </location>
</feature>
<feature type="domain" description="HTH myb-type 1" evidence="1">
    <location>
        <begin position="9"/>
        <end position="61"/>
    </location>
</feature>
<feature type="domain" description="HTH myb-type 2" evidence="1">
    <location>
        <begin position="62"/>
        <end position="116"/>
    </location>
</feature>
<feature type="DNA-binding region" description="H-T-H motif" evidence="1">
    <location>
        <begin position="37"/>
        <end position="61"/>
    </location>
</feature>
<feature type="DNA-binding region" description="H-T-H motif" evidence="1">
    <location>
        <begin position="89"/>
        <end position="112"/>
    </location>
</feature>
<feature type="region of interest" description="Disordered" evidence="2">
    <location>
        <begin position="119"/>
        <end position="145"/>
    </location>
</feature>
<feature type="compositionally biased region" description="Polar residues" evidence="2">
    <location>
        <begin position="130"/>
        <end position="145"/>
    </location>
</feature>
<feature type="sequence conflict" description="In Ref. 1; AAC83582." evidence="7" ref="1">
    <original>T</original>
    <variation>I</variation>
    <location>
        <position position="141"/>
    </location>
</feature>